<accession>Q1JQ94</accession>
<proteinExistence type="inferred from homology"/>
<reference key="1">
    <citation type="submission" date="2007-06" db="EMBL/GenBank/DDBJ databases">
        <authorList>
            <consortium name="NIH - Mammalian Gene Collection (MGC) project"/>
        </authorList>
    </citation>
    <scope>NUCLEOTIDE SEQUENCE [LARGE SCALE MRNA]</scope>
    <source>
        <strain>Hereford</strain>
        <tissue>Fetal cerebellum</tissue>
        <tissue>Hypothalamus</tissue>
    </source>
</reference>
<protein>
    <recommendedName>
        <fullName evidence="3">Retrotransposon Gag-like protein 8</fullName>
    </recommendedName>
    <alternativeName>
        <fullName>Mammalian retrotransposon derived protein 8</fullName>
    </alternativeName>
</protein>
<feature type="chain" id="PRO_0000311695" description="Retrotransposon Gag-like protein 8">
    <location>
        <begin position="1"/>
        <end position="113"/>
    </location>
</feature>
<comment type="miscellaneous">
    <text evidence="1">RTL8C is one of at least 11 genes called Mar or Mart related to long terminal repeat retrotransposons. They do not correspond to functional retrotransposons, but rather to neofunctionalized retrotransposons genes.</text>
</comment>
<comment type="similarity">
    <text evidence="4">Belongs to the FAM127 family.</text>
</comment>
<gene>
    <name type="primary">RTL8A</name>
    <name evidence="3" type="synonym">FAM127B</name>
</gene>
<gene>
    <name type="primary">RTL8B</name>
    <name evidence="2" type="synonym">FAM127C</name>
</gene>
<gene>
    <name type="primary">RTL8C</name>
    <name evidence="1" type="synonym">FAM127A</name>
</gene>
<dbReference type="EMBL" id="BC116150">
    <property type="protein sequence ID" value="AAI16151.1"/>
    <property type="molecule type" value="mRNA"/>
</dbReference>
<dbReference type="EMBL" id="BC142004">
    <property type="protein sequence ID" value="AAI42005.1"/>
    <property type="molecule type" value="mRNA"/>
</dbReference>
<dbReference type="RefSeq" id="NP_001068990.1">
    <property type="nucleotide sequence ID" value="NM_001075522.2"/>
</dbReference>
<dbReference type="RefSeq" id="XP_001250515.1">
    <property type="nucleotide sequence ID" value="XM_001250514.6"/>
</dbReference>
<dbReference type="RefSeq" id="XP_002699607.1">
    <property type="nucleotide sequence ID" value="XM_002699561.5"/>
</dbReference>
<dbReference type="SMR" id="Q1JQ94"/>
<dbReference type="FunCoup" id="Q1JQ94">
    <property type="interactions" value="282"/>
</dbReference>
<dbReference type="PaxDb" id="9913-ENSBTAP00000045990"/>
<dbReference type="Ensembl" id="ENSBTAT00000092168.1">
    <property type="protein sequence ID" value="ENSBTAP00000077509.1"/>
    <property type="gene ID" value="ENSBTAG00000062559.1"/>
</dbReference>
<dbReference type="Ensembl" id="ENSBTAT00000092904.1">
    <property type="protein sequence ID" value="ENSBTAP00000082244.1"/>
    <property type="gene ID" value="ENSBTAG00000056216.1"/>
</dbReference>
<dbReference type="Ensembl" id="ENSBTAT00000132946.1">
    <property type="protein sequence ID" value="ENSBTAP00000094472.1"/>
    <property type="gene ID" value="ENSBTAG00000039890.4"/>
</dbReference>
<dbReference type="GeneID" id="511516"/>
<dbReference type="GeneID" id="783730"/>
<dbReference type="KEGG" id="bta:511516"/>
<dbReference type="KEGG" id="bta:615809"/>
<dbReference type="KEGG" id="bta:783730"/>
<dbReference type="CTD" id="8933"/>
<dbReference type="eggNOG" id="ENOG502RU23">
    <property type="taxonomic scope" value="Eukaryota"/>
</dbReference>
<dbReference type="GeneTree" id="ENSGT00940000154665"/>
<dbReference type="HOGENOM" id="CLU_154949_0_0_1"/>
<dbReference type="InParanoid" id="Q1JQ94"/>
<dbReference type="OrthoDB" id="9689531at2759"/>
<dbReference type="TreeFam" id="TF337843"/>
<dbReference type="Proteomes" id="UP000009136">
    <property type="component" value="Chromosome X"/>
</dbReference>
<dbReference type="InterPro" id="IPR032549">
    <property type="entry name" value="DUF4939"/>
</dbReference>
<dbReference type="Pfam" id="PF16297">
    <property type="entry name" value="DUF4939"/>
    <property type="match status" value="1"/>
</dbReference>
<keyword id="KW-1185">Reference proteome</keyword>
<sequence>MDGRVQLIKALLALPIRPQTRRWRNPIPFPETFDGDTDRLPEFIVQTGAYMLVDENLFTNDALKVTFLITRMTGPALQWVIPYIRKQSPLLNDYRGFLAEMKRVFGWVEDEDF</sequence>
<evidence type="ECO:0000250" key="1">
    <source>
        <dbReference type="UniProtKB" id="A6ZKI3"/>
    </source>
</evidence>
<evidence type="ECO:0000250" key="2">
    <source>
        <dbReference type="UniProtKB" id="Q17RB0"/>
    </source>
</evidence>
<evidence type="ECO:0000250" key="3">
    <source>
        <dbReference type="UniProtKB" id="Q9BWD3"/>
    </source>
</evidence>
<evidence type="ECO:0000305" key="4"/>
<name>RTL8_BOVIN</name>
<organism>
    <name type="scientific">Bos taurus</name>
    <name type="common">Bovine</name>
    <dbReference type="NCBI Taxonomy" id="9913"/>
    <lineage>
        <taxon>Eukaryota</taxon>
        <taxon>Metazoa</taxon>
        <taxon>Chordata</taxon>
        <taxon>Craniata</taxon>
        <taxon>Vertebrata</taxon>
        <taxon>Euteleostomi</taxon>
        <taxon>Mammalia</taxon>
        <taxon>Eutheria</taxon>
        <taxon>Laurasiatheria</taxon>
        <taxon>Artiodactyla</taxon>
        <taxon>Ruminantia</taxon>
        <taxon>Pecora</taxon>
        <taxon>Bovidae</taxon>
        <taxon>Bovinae</taxon>
        <taxon>Bos</taxon>
    </lineage>
</organism>